<proteinExistence type="inferred from homology"/>
<comment type="function">
    <text evidence="1">Catalyzes the phosphorylation of pantothenate (Pan), the first step in CoA biosynthesis.</text>
</comment>
<comment type="catalytic activity">
    <reaction evidence="1">
        <text>(R)-pantothenate + ATP = (R)-4'-phosphopantothenate + ADP + H(+)</text>
        <dbReference type="Rhea" id="RHEA:16373"/>
        <dbReference type="ChEBI" id="CHEBI:10986"/>
        <dbReference type="ChEBI" id="CHEBI:15378"/>
        <dbReference type="ChEBI" id="CHEBI:29032"/>
        <dbReference type="ChEBI" id="CHEBI:30616"/>
        <dbReference type="ChEBI" id="CHEBI:456216"/>
        <dbReference type="EC" id="2.7.1.33"/>
    </reaction>
</comment>
<comment type="cofactor">
    <cofactor evidence="1">
        <name>NH4(+)</name>
        <dbReference type="ChEBI" id="CHEBI:28938"/>
    </cofactor>
    <cofactor evidence="1">
        <name>K(+)</name>
        <dbReference type="ChEBI" id="CHEBI:29103"/>
    </cofactor>
    <text evidence="1">A monovalent cation. Ammonium or potassium.</text>
</comment>
<comment type="pathway">
    <text evidence="1">Cofactor biosynthesis; coenzyme A biosynthesis; CoA from (R)-pantothenate: step 1/5.</text>
</comment>
<comment type="subunit">
    <text evidence="1">Homodimer.</text>
</comment>
<comment type="subcellular location">
    <subcellularLocation>
        <location evidence="1">Cytoplasm</location>
    </subcellularLocation>
</comment>
<comment type="similarity">
    <text evidence="1">Belongs to the type III pantothenate kinase family.</text>
</comment>
<reference key="1">
    <citation type="journal article" date="2009" name="Appl. Environ. Microbiol.">
        <title>Novel features of the polysaccharide-digesting gliding bacterium Flavobacterium johnsoniae as revealed by genome sequence analysis.</title>
        <authorList>
            <person name="McBride M.J."/>
            <person name="Xie G."/>
            <person name="Martens E.C."/>
            <person name="Lapidus A."/>
            <person name="Henrissat B."/>
            <person name="Rhodes R.G."/>
            <person name="Goltsman E."/>
            <person name="Wang W."/>
            <person name="Xu J."/>
            <person name="Hunnicutt D.W."/>
            <person name="Staroscik A.M."/>
            <person name="Hoover T.R."/>
            <person name="Cheng Y.Q."/>
            <person name="Stein J.L."/>
        </authorList>
    </citation>
    <scope>NUCLEOTIDE SEQUENCE [LARGE SCALE GENOMIC DNA]</scope>
    <source>
        <strain>ATCC 17061 / DSM 2064 / JCM 8514 / BCRC 14874 / CCUG 350202 / NBRC 14942 / NCIMB 11054 / UW101</strain>
    </source>
</reference>
<gene>
    <name evidence="1" type="primary">coaX</name>
    <name type="ordered locus">Fjoh_1411</name>
</gene>
<name>COAX_FLAJ1</name>
<feature type="chain" id="PRO_1000085853" description="Type III pantothenate kinase">
    <location>
        <begin position="1"/>
        <end position="244"/>
    </location>
</feature>
<feature type="active site" description="Proton acceptor" evidence="1">
    <location>
        <position position="96"/>
    </location>
</feature>
<feature type="binding site" evidence="1">
    <location>
        <begin position="6"/>
        <end position="13"/>
    </location>
    <ligand>
        <name>ATP</name>
        <dbReference type="ChEBI" id="CHEBI:30616"/>
    </ligand>
</feature>
<feature type="binding site" evidence="1">
    <location>
        <position position="87"/>
    </location>
    <ligand>
        <name>substrate</name>
    </ligand>
</feature>
<feature type="binding site" evidence="1">
    <location>
        <begin position="94"/>
        <end position="97"/>
    </location>
    <ligand>
        <name>substrate</name>
    </ligand>
</feature>
<feature type="binding site" evidence="1">
    <location>
        <position position="117"/>
    </location>
    <ligand>
        <name>K(+)</name>
        <dbReference type="ChEBI" id="CHEBI:29103"/>
    </ligand>
</feature>
<feature type="binding site" evidence="1">
    <location>
        <position position="120"/>
    </location>
    <ligand>
        <name>ATP</name>
        <dbReference type="ChEBI" id="CHEBI:30616"/>
    </ligand>
</feature>
<feature type="binding site" evidence="1">
    <location>
        <position position="172"/>
    </location>
    <ligand>
        <name>substrate</name>
    </ligand>
</feature>
<keyword id="KW-0067">ATP-binding</keyword>
<keyword id="KW-0173">Coenzyme A biosynthesis</keyword>
<keyword id="KW-0963">Cytoplasm</keyword>
<keyword id="KW-0418">Kinase</keyword>
<keyword id="KW-0479">Metal-binding</keyword>
<keyword id="KW-0547">Nucleotide-binding</keyword>
<keyword id="KW-0630">Potassium</keyword>
<keyword id="KW-0808">Transferase</keyword>
<protein>
    <recommendedName>
        <fullName evidence="1">Type III pantothenate kinase</fullName>
        <ecNumber evidence="1">2.7.1.33</ecNumber>
    </recommendedName>
    <alternativeName>
        <fullName evidence="1">PanK-III</fullName>
    </alternativeName>
    <alternativeName>
        <fullName evidence="1">Pantothenic acid kinase</fullName>
    </alternativeName>
</protein>
<organism>
    <name type="scientific">Flavobacterium johnsoniae (strain ATCC 17061 / DSM 2064 / JCM 8514 / BCRC 14874 / CCUG 350202 / NBRC 14942 / NCIMB 11054 / UW101)</name>
    <name type="common">Cytophaga johnsonae</name>
    <dbReference type="NCBI Taxonomy" id="376686"/>
    <lineage>
        <taxon>Bacteria</taxon>
        <taxon>Pseudomonadati</taxon>
        <taxon>Bacteroidota</taxon>
        <taxon>Flavobacteriia</taxon>
        <taxon>Flavobacteriales</taxon>
        <taxon>Flavobacteriaceae</taxon>
        <taxon>Flavobacterium</taxon>
    </lineage>
</organism>
<evidence type="ECO:0000255" key="1">
    <source>
        <dbReference type="HAMAP-Rule" id="MF_01274"/>
    </source>
</evidence>
<dbReference type="EC" id="2.7.1.33" evidence="1"/>
<dbReference type="EMBL" id="CP000685">
    <property type="protein sequence ID" value="ABQ04443.1"/>
    <property type="molecule type" value="Genomic_DNA"/>
</dbReference>
<dbReference type="RefSeq" id="WP_012023491.1">
    <property type="nucleotide sequence ID" value="NC_009441.1"/>
</dbReference>
<dbReference type="SMR" id="A5FK26"/>
<dbReference type="STRING" id="376686.Fjoh_1411"/>
<dbReference type="KEGG" id="fjo:Fjoh_1411"/>
<dbReference type="eggNOG" id="COG1521">
    <property type="taxonomic scope" value="Bacteria"/>
</dbReference>
<dbReference type="HOGENOM" id="CLU_066627_2_0_10"/>
<dbReference type="OrthoDB" id="9804707at2"/>
<dbReference type="UniPathway" id="UPA00241">
    <property type="reaction ID" value="UER00352"/>
</dbReference>
<dbReference type="Proteomes" id="UP000006694">
    <property type="component" value="Chromosome"/>
</dbReference>
<dbReference type="GO" id="GO:0005737">
    <property type="term" value="C:cytoplasm"/>
    <property type="evidence" value="ECO:0007669"/>
    <property type="project" value="UniProtKB-SubCell"/>
</dbReference>
<dbReference type="GO" id="GO:0005524">
    <property type="term" value="F:ATP binding"/>
    <property type="evidence" value="ECO:0007669"/>
    <property type="project" value="UniProtKB-UniRule"/>
</dbReference>
<dbReference type="GO" id="GO:0046872">
    <property type="term" value="F:metal ion binding"/>
    <property type="evidence" value="ECO:0007669"/>
    <property type="project" value="UniProtKB-KW"/>
</dbReference>
<dbReference type="GO" id="GO:0004594">
    <property type="term" value="F:pantothenate kinase activity"/>
    <property type="evidence" value="ECO:0007669"/>
    <property type="project" value="UniProtKB-UniRule"/>
</dbReference>
<dbReference type="GO" id="GO:0015937">
    <property type="term" value="P:coenzyme A biosynthetic process"/>
    <property type="evidence" value="ECO:0007669"/>
    <property type="project" value="UniProtKB-UniRule"/>
</dbReference>
<dbReference type="CDD" id="cd24015">
    <property type="entry name" value="ASKHA_NBD_PanK-III"/>
    <property type="match status" value="1"/>
</dbReference>
<dbReference type="Gene3D" id="3.30.420.40">
    <property type="match status" value="2"/>
</dbReference>
<dbReference type="HAMAP" id="MF_01274">
    <property type="entry name" value="Pantothen_kinase_3"/>
    <property type="match status" value="1"/>
</dbReference>
<dbReference type="InterPro" id="IPR043129">
    <property type="entry name" value="ATPase_NBD"/>
</dbReference>
<dbReference type="InterPro" id="IPR004619">
    <property type="entry name" value="Type_III_PanK"/>
</dbReference>
<dbReference type="NCBIfam" id="TIGR00671">
    <property type="entry name" value="baf"/>
    <property type="match status" value="1"/>
</dbReference>
<dbReference type="NCBIfam" id="NF009853">
    <property type="entry name" value="PRK13320.1-5"/>
    <property type="match status" value="1"/>
</dbReference>
<dbReference type="PANTHER" id="PTHR34265">
    <property type="entry name" value="TYPE III PANTOTHENATE KINASE"/>
    <property type="match status" value="1"/>
</dbReference>
<dbReference type="PANTHER" id="PTHR34265:SF1">
    <property type="entry name" value="TYPE III PANTOTHENATE KINASE"/>
    <property type="match status" value="1"/>
</dbReference>
<dbReference type="Pfam" id="PF03309">
    <property type="entry name" value="Pan_kinase"/>
    <property type="match status" value="1"/>
</dbReference>
<dbReference type="SUPFAM" id="SSF53067">
    <property type="entry name" value="Actin-like ATPase domain"/>
    <property type="match status" value="2"/>
</dbReference>
<accession>A5FK26</accession>
<sequence>MILTVDVGNTRIKAAVFEGSSVLEYFVFEKNELEKRIEKILEKFPNCSDLVVASVGDVEKQSFLSFEKQLNVHFFTHEDIFPFHNKYATPKTLGIDRMILAAGATLQFPKQNRLVIDAGTCITYDFIDENDNYLGGAISPGLRLRYETLHNYTARLPLLTLDQPHSYIGDSTAQAIHSGVVNGFVYEIDGFIDEYRSNFSNFIIILTGGDAEFLAKRLKNTIFANSNFLLESLSQTYQYKIDND</sequence>